<reference key="1">
    <citation type="journal article" date="2003" name="Nucleic Acids Res.">
        <title>The complete genome sequence and analysis of Corynebacterium diphtheriae NCTC13129.</title>
        <authorList>
            <person name="Cerdeno-Tarraga A.-M."/>
            <person name="Efstratiou A."/>
            <person name="Dover L.G."/>
            <person name="Holden M.T.G."/>
            <person name="Pallen M.J."/>
            <person name="Bentley S.D."/>
            <person name="Besra G.S."/>
            <person name="Churcher C.M."/>
            <person name="James K.D."/>
            <person name="De Zoysa A."/>
            <person name="Chillingworth T."/>
            <person name="Cronin A."/>
            <person name="Dowd L."/>
            <person name="Feltwell T."/>
            <person name="Hamlin N."/>
            <person name="Holroyd S."/>
            <person name="Jagels K."/>
            <person name="Moule S."/>
            <person name="Quail M.A."/>
            <person name="Rabbinowitsch E."/>
            <person name="Rutherford K.M."/>
            <person name="Thomson N.R."/>
            <person name="Unwin L."/>
            <person name="Whitehead S."/>
            <person name="Barrell B.G."/>
            <person name="Parkhill J."/>
        </authorList>
    </citation>
    <scope>NUCLEOTIDE SEQUENCE [LARGE SCALE GENOMIC DNA]</scope>
    <source>
        <strain>ATCC 700971 / NCTC 13129 / Biotype gravis</strain>
    </source>
</reference>
<keyword id="KW-0067">ATP-binding</keyword>
<keyword id="KW-0963">Cytoplasm</keyword>
<keyword id="KW-0418">Kinase</keyword>
<keyword id="KW-0547">Nucleotide-binding</keyword>
<keyword id="KW-1185">Reference proteome</keyword>
<keyword id="KW-0808">Transferase</keyword>
<comment type="function">
    <text evidence="1">Essential for recycling GMP and indirectly, cGMP.</text>
</comment>
<comment type="catalytic activity">
    <reaction evidence="1">
        <text>GMP + ATP = GDP + ADP</text>
        <dbReference type="Rhea" id="RHEA:20780"/>
        <dbReference type="ChEBI" id="CHEBI:30616"/>
        <dbReference type="ChEBI" id="CHEBI:58115"/>
        <dbReference type="ChEBI" id="CHEBI:58189"/>
        <dbReference type="ChEBI" id="CHEBI:456216"/>
        <dbReference type="EC" id="2.7.4.8"/>
    </reaction>
</comment>
<comment type="subcellular location">
    <subcellularLocation>
        <location evidence="1">Cytoplasm</location>
    </subcellularLocation>
</comment>
<comment type="similarity">
    <text evidence="1">Belongs to the guanylate kinase family.</text>
</comment>
<protein>
    <recommendedName>
        <fullName evidence="1">Guanylate kinase</fullName>
        <ecNumber evidence="1">2.7.4.8</ecNumber>
    </recommendedName>
    <alternativeName>
        <fullName evidence="1">GMP kinase</fullName>
    </alternativeName>
</protein>
<organism>
    <name type="scientific">Corynebacterium diphtheriae (strain ATCC 700971 / NCTC 13129 / Biotype gravis)</name>
    <dbReference type="NCBI Taxonomy" id="257309"/>
    <lineage>
        <taxon>Bacteria</taxon>
        <taxon>Bacillati</taxon>
        <taxon>Actinomycetota</taxon>
        <taxon>Actinomycetes</taxon>
        <taxon>Mycobacteriales</taxon>
        <taxon>Corynebacteriaceae</taxon>
        <taxon>Corynebacterium</taxon>
    </lineage>
</organism>
<feature type="chain" id="PRO_0000170527" description="Guanylate kinase">
    <location>
        <begin position="1"/>
        <end position="191"/>
    </location>
</feature>
<feature type="domain" description="Guanylate kinase-like" evidence="1">
    <location>
        <begin position="8"/>
        <end position="188"/>
    </location>
</feature>
<feature type="binding site" evidence="1">
    <location>
        <begin position="15"/>
        <end position="22"/>
    </location>
    <ligand>
        <name>ATP</name>
        <dbReference type="ChEBI" id="CHEBI:30616"/>
    </ligand>
</feature>
<dbReference type="EC" id="2.7.4.8" evidence="1"/>
<dbReference type="EMBL" id="BX248357">
    <property type="protein sequence ID" value="CAE49856.1"/>
    <property type="molecule type" value="Genomic_DNA"/>
</dbReference>
<dbReference type="RefSeq" id="WP_003851634.1">
    <property type="nucleotide sequence ID" value="NC_002935.2"/>
</dbReference>
<dbReference type="SMR" id="P60550"/>
<dbReference type="STRING" id="257309.DIP1328"/>
<dbReference type="GeneID" id="29421573"/>
<dbReference type="KEGG" id="cdi:DIP1328"/>
<dbReference type="HOGENOM" id="CLU_001715_1_1_11"/>
<dbReference type="Proteomes" id="UP000002198">
    <property type="component" value="Chromosome"/>
</dbReference>
<dbReference type="GO" id="GO:0005829">
    <property type="term" value="C:cytosol"/>
    <property type="evidence" value="ECO:0007669"/>
    <property type="project" value="TreeGrafter"/>
</dbReference>
<dbReference type="GO" id="GO:0005524">
    <property type="term" value="F:ATP binding"/>
    <property type="evidence" value="ECO:0007669"/>
    <property type="project" value="UniProtKB-UniRule"/>
</dbReference>
<dbReference type="GO" id="GO:0004385">
    <property type="term" value="F:guanylate kinase activity"/>
    <property type="evidence" value="ECO:0007669"/>
    <property type="project" value="UniProtKB-UniRule"/>
</dbReference>
<dbReference type="CDD" id="cd00071">
    <property type="entry name" value="GMPK"/>
    <property type="match status" value="1"/>
</dbReference>
<dbReference type="FunFam" id="3.30.63.10:FF:000002">
    <property type="entry name" value="Guanylate kinase 1"/>
    <property type="match status" value="1"/>
</dbReference>
<dbReference type="Gene3D" id="3.30.63.10">
    <property type="entry name" value="Guanylate Kinase phosphate binding domain"/>
    <property type="match status" value="1"/>
</dbReference>
<dbReference type="Gene3D" id="3.40.50.300">
    <property type="entry name" value="P-loop containing nucleotide triphosphate hydrolases"/>
    <property type="match status" value="1"/>
</dbReference>
<dbReference type="HAMAP" id="MF_00328">
    <property type="entry name" value="Guanylate_kinase"/>
    <property type="match status" value="1"/>
</dbReference>
<dbReference type="InterPro" id="IPR008145">
    <property type="entry name" value="GK/Ca_channel_bsu"/>
</dbReference>
<dbReference type="InterPro" id="IPR008144">
    <property type="entry name" value="Guanylate_kin-like_dom"/>
</dbReference>
<dbReference type="InterPro" id="IPR017665">
    <property type="entry name" value="Guanylate_kinase"/>
</dbReference>
<dbReference type="InterPro" id="IPR020590">
    <property type="entry name" value="Guanylate_kinase_CS"/>
</dbReference>
<dbReference type="InterPro" id="IPR027417">
    <property type="entry name" value="P-loop_NTPase"/>
</dbReference>
<dbReference type="NCBIfam" id="TIGR03263">
    <property type="entry name" value="guanyl_kin"/>
    <property type="match status" value="1"/>
</dbReference>
<dbReference type="PANTHER" id="PTHR23117:SF13">
    <property type="entry name" value="GUANYLATE KINASE"/>
    <property type="match status" value="1"/>
</dbReference>
<dbReference type="PANTHER" id="PTHR23117">
    <property type="entry name" value="GUANYLATE KINASE-RELATED"/>
    <property type="match status" value="1"/>
</dbReference>
<dbReference type="Pfam" id="PF00625">
    <property type="entry name" value="Guanylate_kin"/>
    <property type="match status" value="1"/>
</dbReference>
<dbReference type="SMART" id="SM00072">
    <property type="entry name" value="GuKc"/>
    <property type="match status" value="1"/>
</dbReference>
<dbReference type="SUPFAM" id="SSF52540">
    <property type="entry name" value="P-loop containing nucleoside triphosphate hydrolases"/>
    <property type="match status" value="1"/>
</dbReference>
<dbReference type="PROSITE" id="PS00856">
    <property type="entry name" value="GUANYLATE_KINASE_1"/>
    <property type="match status" value="1"/>
</dbReference>
<dbReference type="PROSITE" id="PS50052">
    <property type="entry name" value="GUANYLATE_KINASE_2"/>
    <property type="match status" value="1"/>
</dbReference>
<gene>
    <name evidence="1" type="primary">gmk</name>
    <name type="ordered locus">DIP1328</name>
</gene>
<sequence length="191" mass="20896">MSGDNPVGRLVVLAGPSAVGKSTVVHRLREEIEDLYFSVSMTTRAPRPGERDGVDYFFVSPEEFQSKIDAGEMLEWADIHGGLQRSGTPAGPVEAALLAGRPVLVEVDLVGARNVASLKPESETVFLAPPSWEVLVERLTGRGTEPEDVITRRLETAKNELTAQHEFKHVVVNEDVEKAVSDIKEILVGRR</sequence>
<proteinExistence type="inferred from homology"/>
<accession>P60550</accession>
<name>KGUA_CORDI</name>
<evidence type="ECO:0000255" key="1">
    <source>
        <dbReference type="HAMAP-Rule" id="MF_00328"/>
    </source>
</evidence>